<comment type="function">
    <text evidence="1">Required for the export of heme to the periplasm for the biogenesis of c-type cytochromes.</text>
</comment>
<comment type="subcellular location">
    <subcellularLocation>
        <location evidence="1">Cell inner membrane</location>
        <topology evidence="1">Multi-pass membrane protein</topology>
    </subcellularLocation>
</comment>
<comment type="similarity">
    <text evidence="3">Belongs to the CcmB/CycW/HelB family.</text>
</comment>
<name>CCMB_ECOL6</name>
<proteinExistence type="inferred from homology"/>
<dbReference type="EMBL" id="AE014075">
    <property type="protein sequence ID" value="AAN81191.1"/>
    <property type="molecule type" value="Genomic_DNA"/>
</dbReference>
<dbReference type="RefSeq" id="WP_000971730.1">
    <property type="nucleotide sequence ID" value="NZ_CP051263.1"/>
</dbReference>
<dbReference type="SMR" id="P0ABL9"/>
<dbReference type="STRING" id="199310.c2737"/>
<dbReference type="GeneID" id="93774978"/>
<dbReference type="KEGG" id="ecc:c2737"/>
<dbReference type="eggNOG" id="COG2386">
    <property type="taxonomic scope" value="Bacteria"/>
</dbReference>
<dbReference type="HOGENOM" id="CLU_079069_1_0_6"/>
<dbReference type="BioCyc" id="ECOL199310:C2737-MONOMER"/>
<dbReference type="Proteomes" id="UP000001410">
    <property type="component" value="Chromosome"/>
</dbReference>
<dbReference type="GO" id="GO:0005886">
    <property type="term" value="C:plasma membrane"/>
    <property type="evidence" value="ECO:0007669"/>
    <property type="project" value="UniProtKB-SubCell"/>
</dbReference>
<dbReference type="GO" id="GO:0015232">
    <property type="term" value="F:heme transmembrane transporter activity"/>
    <property type="evidence" value="ECO:0007669"/>
    <property type="project" value="InterPro"/>
</dbReference>
<dbReference type="GO" id="GO:1903607">
    <property type="term" value="P:cytochrome c biosynthetic process"/>
    <property type="evidence" value="ECO:0007669"/>
    <property type="project" value="TreeGrafter"/>
</dbReference>
<dbReference type="GO" id="GO:0017004">
    <property type="term" value="P:cytochrome complex assembly"/>
    <property type="evidence" value="ECO:0007669"/>
    <property type="project" value="UniProtKB-KW"/>
</dbReference>
<dbReference type="InterPro" id="IPR003544">
    <property type="entry name" value="Cyt_c_biogenesis_CcmB"/>
</dbReference>
<dbReference type="InterPro" id="IPR026031">
    <property type="entry name" value="Cyt_c_CcmB_bac"/>
</dbReference>
<dbReference type="NCBIfam" id="TIGR01190">
    <property type="entry name" value="ccmB"/>
    <property type="match status" value="1"/>
</dbReference>
<dbReference type="PANTHER" id="PTHR30070:SF1">
    <property type="entry name" value="CYTOCHROME C BIOGENESIS B-RELATED"/>
    <property type="match status" value="1"/>
</dbReference>
<dbReference type="PANTHER" id="PTHR30070">
    <property type="entry name" value="HEME EXPORTER PROTEIN B"/>
    <property type="match status" value="1"/>
</dbReference>
<dbReference type="Pfam" id="PF03379">
    <property type="entry name" value="CcmB"/>
    <property type="match status" value="1"/>
</dbReference>
<dbReference type="PIRSF" id="PIRSF002764">
    <property type="entry name" value="CcmB"/>
    <property type="match status" value="1"/>
</dbReference>
<dbReference type="PRINTS" id="PR01414">
    <property type="entry name" value="CCMBBIOGNSIS"/>
</dbReference>
<evidence type="ECO:0000250" key="1"/>
<evidence type="ECO:0000255" key="2"/>
<evidence type="ECO:0000305" key="3"/>
<reference key="1">
    <citation type="journal article" date="2002" name="Proc. Natl. Acad. Sci. U.S.A.">
        <title>Extensive mosaic structure revealed by the complete genome sequence of uropathogenic Escherichia coli.</title>
        <authorList>
            <person name="Welch R.A."/>
            <person name="Burland V."/>
            <person name="Plunkett G. III"/>
            <person name="Redford P."/>
            <person name="Roesch P."/>
            <person name="Rasko D."/>
            <person name="Buckles E.L."/>
            <person name="Liou S.-R."/>
            <person name="Boutin A."/>
            <person name="Hackett J."/>
            <person name="Stroud D."/>
            <person name="Mayhew G.F."/>
            <person name="Rose D.J."/>
            <person name="Zhou S."/>
            <person name="Schwartz D.C."/>
            <person name="Perna N.T."/>
            <person name="Mobley H.L.T."/>
            <person name="Donnenberg M.S."/>
            <person name="Blattner F.R."/>
        </authorList>
    </citation>
    <scope>NUCLEOTIDE SEQUENCE [LARGE SCALE GENOMIC DNA]</scope>
    <source>
        <strain>CFT073 / ATCC 700928 / UPEC</strain>
    </source>
</reference>
<protein>
    <recommendedName>
        <fullName>Heme exporter protein B</fullName>
    </recommendedName>
    <alternativeName>
        <fullName>Cytochrome c-type biogenesis protein CcmB</fullName>
    </alternativeName>
</protein>
<gene>
    <name type="primary">ccmB</name>
    <name type="ordered locus">c2737</name>
</gene>
<organism>
    <name type="scientific">Escherichia coli O6:H1 (strain CFT073 / ATCC 700928 / UPEC)</name>
    <dbReference type="NCBI Taxonomy" id="199310"/>
    <lineage>
        <taxon>Bacteria</taxon>
        <taxon>Pseudomonadati</taxon>
        <taxon>Pseudomonadota</taxon>
        <taxon>Gammaproteobacteria</taxon>
        <taxon>Enterobacterales</taxon>
        <taxon>Enterobacteriaceae</taxon>
        <taxon>Escherichia</taxon>
    </lineage>
</organism>
<feature type="chain" id="PRO_0000201541" description="Heme exporter protein B">
    <location>
        <begin position="1"/>
        <end position="220"/>
    </location>
</feature>
<feature type="topological domain" description="Cytoplasmic" evidence="2">
    <location>
        <begin position="1"/>
        <end position="20"/>
    </location>
</feature>
<feature type="transmembrane region" description="Helical" evidence="2">
    <location>
        <begin position="21"/>
        <end position="41"/>
    </location>
</feature>
<feature type="topological domain" description="Periplasmic" evidence="2">
    <location>
        <begin position="42"/>
        <end position="44"/>
    </location>
</feature>
<feature type="transmembrane region" description="Helical" evidence="2">
    <location>
        <begin position="45"/>
        <end position="65"/>
    </location>
</feature>
<feature type="topological domain" description="Cytoplasmic" evidence="2">
    <location>
        <begin position="66"/>
        <end position="100"/>
    </location>
</feature>
<feature type="transmembrane region" description="Helical" evidence="2">
    <location>
        <begin position="101"/>
        <end position="121"/>
    </location>
</feature>
<feature type="topological domain" description="Periplasmic" evidence="2">
    <location>
        <begin position="122"/>
        <end position="127"/>
    </location>
</feature>
<feature type="transmembrane region" description="Helical" evidence="2">
    <location>
        <begin position="128"/>
        <end position="148"/>
    </location>
</feature>
<feature type="topological domain" description="Cytoplasmic" evidence="2">
    <location>
        <begin position="149"/>
        <end position="158"/>
    </location>
</feature>
<feature type="transmembrane region" description="Helical" evidence="2">
    <location>
        <begin position="159"/>
        <end position="179"/>
    </location>
</feature>
<feature type="topological domain" description="Periplasmic" evidence="2">
    <location>
        <begin position="180"/>
        <end position="192"/>
    </location>
</feature>
<feature type="transmembrane region" description="Helical" evidence="2">
    <location>
        <begin position="193"/>
        <end position="213"/>
    </location>
</feature>
<feature type="topological domain" description="Cytoplasmic" evidence="2">
    <location>
        <begin position="214"/>
        <end position="220"/>
    </location>
</feature>
<keyword id="KW-0997">Cell inner membrane</keyword>
<keyword id="KW-1003">Cell membrane</keyword>
<keyword id="KW-0201">Cytochrome c-type biogenesis</keyword>
<keyword id="KW-0472">Membrane</keyword>
<keyword id="KW-1185">Reference proteome</keyword>
<keyword id="KW-0812">Transmembrane</keyword>
<keyword id="KW-1133">Transmembrane helix</keyword>
<keyword id="KW-0813">Transport</keyword>
<accession>P0ABL9</accession>
<accession>P33930</accession>
<sequence>MMFWRIFRLELRVAFRHSAEIANPLWFFLIVITLFPLSIGPEPQLLARIAPGIIWVAALLSSLLALERLFRDDLQDGSLEQLMLLPLPLPAVVLAKVMAHWMVTGLPLLILSPLVAMLLGMDVYGWQVMALTLLLGTPTLGFLGAPGVALTVGLKRGGVLLSILVLPLTIPLLIFATAAMDAASMHLPVDGYLAILGALLAGTATLSPFATAAALRISIQ</sequence>